<keyword id="KW-0106">Calcium</keyword>
<keyword id="KW-1003">Cell membrane</keyword>
<keyword id="KW-0966">Cell projection</keyword>
<keyword id="KW-1015">Disulfide bond</keyword>
<keyword id="KW-0325">Glycoprotein</keyword>
<keyword id="KW-0391">Immunity</keyword>
<keyword id="KW-0399">Innate immunity</keyword>
<keyword id="KW-0430">Lectin</keyword>
<keyword id="KW-0472">Membrane</keyword>
<keyword id="KW-0479">Metal-binding</keyword>
<keyword id="KW-1185">Reference proteome</keyword>
<keyword id="KW-0735">Signal-anchor</keyword>
<keyword id="KW-0812">Transmembrane</keyword>
<keyword id="KW-1133">Transmembrane helix</keyword>
<accession>Q9R0Q8</accession>
<protein>
    <recommendedName>
        <fullName>C-type lectin domain family 4 member E</fullName>
    </recommendedName>
    <alternativeName>
        <fullName>C-type lectin superfamily member 9</fullName>
    </alternativeName>
    <alternativeName>
        <fullName evidence="12">Macrophage-inducible C-type lectin</fullName>
        <shortName evidence="12 13">Mincle</shortName>
    </alternativeName>
</protein>
<dbReference type="EMBL" id="AB024717">
    <property type="protein sequence ID" value="BAA83754.1"/>
    <property type="molecule type" value="mRNA"/>
</dbReference>
<dbReference type="EMBL" id="BC003218">
    <property type="protein sequence ID" value="AAH03218.1"/>
    <property type="molecule type" value="mRNA"/>
</dbReference>
<dbReference type="CCDS" id="CCDS20514.1"/>
<dbReference type="RefSeq" id="NP_064332.1">
    <property type="nucleotide sequence ID" value="NM_019948.2"/>
</dbReference>
<dbReference type="SMR" id="Q9R0Q8"/>
<dbReference type="BioGRID" id="208105">
    <property type="interactions" value="1"/>
</dbReference>
<dbReference type="FunCoup" id="Q9R0Q8">
    <property type="interactions" value="230"/>
</dbReference>
<dbReference type="STRING" id="10090.ENSMUSP00000032239"/>
<dbReference type="ChEMBL" id="CHEMBL4105754"/>
<dbReference type="GlyCosmos" id="Q9R0Q8">
    <property type="glycosylation" value="1 site, No reported glycans"/>
</dbReference>
<dbReference type="GlyGen" id="Q9R0Q8">
    <property type="glycosylation" value="1 site"/>
</dbReference>
<dbReference type="PhosphoSitePlus" id="Q9R0Q8"/>
<dbReference type="SwissPalm" id="Q9R0Q8"/>
<dbReference type="PaxDb" id="10090-ENSMUSP00000032239"/>
<dbReference type="ProteomicsDB" id="285467"/>
<dbReference type="Antibodypedia" id="23066">
    <property type="antibodies" value="320 antibodies from 28 providers"/>
</dbReference>
<dbReference type="DNASU" id="56619"/>
<dbReference type="Ensembl" id="ENSMUST00000032239.11">
    <property type="protein sequence ID" value="ENSMUSP00000032239.5"/>
    <property type="gene ID" value="ENSMUSG00000030142.11"/>
</dbReference>
<dbReference type="GeneID" id="56619"/>
<dbReference type="KEGG" id="mmu:56619"/>
<dbReference type="UCSC" id="uc009dqk.1">
    <property type="organism name" value="mouse"/>
</dbReference>
<dbReference type="AGR" id="MGI:1861232"/>
<dbReference type="CTD" id="26253"/>
<dbReference type="MGI" id="MGI:1861232">
    <property type="gene designation" value="Clec4e"/>
</dbReference>
<dbReference type="VEuPathDB" id="HostDB:ENSMUSG00000030142"/>
<dbReference type="eggNOG" id="KOG4297">
    <property type="taxonomic scope" value="Eukaryota"/>
</dbReference>
<dbReference type="GeneTree" id="ENSGT00940000160666"/>
<dbReference type="InParanoid" id="Q9R0Q8"/>
<dbReference type="OMA" id="CPLNWEH"/>
<dbReference type="OrthoDB" id="6337382at2759"/>
<dbReference type="PhylomeDB" id="Q9R0Q8"/>
<dbReference type="TreeFam" id="TF333341"/>
<dbReference type="Reactome" id="R-MMU-5621480">
    <property type="pathway name" value="Dectin-2 family"/>
</dbReference>
<dbReference type="BioGRID-ORCS" id="56619">
    <property type="hits" value="0 hits in 77 CRISPR screens"/>
</dbReference>
<dbReference type="PRO" id="PR:Q9R0Q8"/>
<dbReference type="Proteomes" id="UP000000589">
    <property type="component" value="Chromosome 6"/>
</dbReference>
<dbReference type="RNAct" id="Q9R0Q8">
    <property type="molecule type" value="protein"/>
</dbReference>
<dbReference type="Bgee" id="ENSMUSG00000030142">
    <property type="expression patterns" value="Expressed in granulocyte and 27 other cell types or tissues"/>
</dbReference>
<dbReference type="ExpressionAtlas" id="Q9R0Q8">
    <property type="expression patterns" value="baseline and differential"/>
</dbReference>
<dbReference type="GO" id="GO:0042995">
    <property type="term" value="C:cell projection"/>
    <property type="evidence" value="ECO:0007669"/>
    <property type="project" value="UniProtKB-KW"/>
</dbReference>
<dbReference type="GO" id="GO:0016020">
    <property type="term" value="C:membrane"/>
    <property type="evidence" value="ECO:0000250"/>
    <property type="project" value="UniProtKB"/>
</dbReference>
<dbReference type="GO" id="GO:0001891">
    <property type="term" value="C:phagocytic cup"/>
    <property type="evidence" value="ECO:0007669"/>
    <property type="project" value="UniProtKB-SubCell"/>
</dbReference>
<dbReference type="GO" id="GO:0030670">
    <property type="term" value="C:phagocytic vesicle membrane"/>
    <property type="evidence" value="ECO:0000314"/>
    <property type="project" value="UniProtKB"/>
</dbReference>
<dbReference type="GO" id="GO:0005886">
    <property type="term" value="C:plasma membrane"/>
    <property type="evidence" value="ECO:0000314"/>
    <property type="project" value="UniProtKB"/>
</dbReference>
<dbReference type="GO" id="GO:0005509">
    <property type="term" value="F:calcium ion binding"/>
    <property type="evidence" value="ECO:0000250"/>
    <property type="project" value="UniProtKB"/>
</dbReference>
<dbReference type="GO" id="GO:0030246">
    <property type="term" value="F:carbohydrate binding"/>
    <property type="evidence" value="ECO:0007669"/>
    <property type="project" value="UniProtKB-KW"/>
</dbReference>
<dbReference type="GO" id="GO:0051861">
    <property type="term" value="F:glycolipid binding"/>
    <property type="evidence" value="ECO:0000353"/>
    <property type="project" value="UniProtKB"/>
</dbReference>
<dbReference type="GO" id="GO:0038187">
    <property type="term" value="F:pattern recognition receptor activity"/>
    <property type="evidence" value="ECO:0000314"/>
    <property type="project" value="UniProtKB"/>
</dbReference>
<dbReference type="GO" id="GO:0038023">
    <property type="term" value="F:signaling receptor activity"/>
    <property type="evidence" value="ECO:0000314"/>
    <property type="project" value="UniProtKB"/>
</dbReference>
<dbReference type="GO" id="GO:0061760">
    <property type="term" value="P:antifungal innate immune response"/>
    <property type="evidence" value="ECO:0000315"/>
    <property type="project" value="UniProtKB"/>
</dbReference>
<dbReference type="GO" id="GO:0042742">
    <property type="term" value="P:defense response to bacterium"/>
    <property type="evidence" value="ECO:0000315"/>
    <property type="project" value="MGI"/>
</dbReference>
<dbReference type="GO" id="GO:0038094">
    <property type="term" value="P:Fc-gamma receptor signaling pathway"/>
    <property type="evidence" value="ECO:0000314"/>
    <property type="project" value="MGI"/>
</dbReference>
<dbReference type="GO" id="GO:0006955">
    <property type="term" value="P:immune response"/>
    <property type="evidence" value="ECO:0000315"/>
    <property type="project" value="UniProtKB"/>
</dbReference>
<dbReference type="GO" id="GO:0045087">
    <property type="term" value="P:innate immune response"/>
    <property type="evidence" value="ECO:0000314"/>
    <property type="project" value="UniProtKB"/>
</dbReference>
<dbReference type="GO" id="GO:0002221">
    <property type="term" value="P:pattern recognition receptor signaling pathway"/>
    <property type="evidence" value="ECO:0000250"/>
    <property type="project" value="UniProtKB"/>
</dbReference>
<dbReference type="GO" id="GO:0001819">
    <property type="term" value="P:positive regulation of cytokine production"/>
    <property type="evidence" value="ECO:0000314"/>
    <property type="project" value="UniProtKB"/>
</dbReference>
<dbReference type="GO" id="GO:0002292">
    <property type="term" value="P:T cell differentiation involved in immune response"/>
    <property type="evidence" value="ECO:0000315"/>
    <property type="project" value="MGI"/>
</dbReference>
<dbReference type="CDD" id="cd03590">
    <property type="entry name" value="CLECT_DC-SIGN_like"/>
    <property type="match status" value="1"/>
</dbReference>
<dbReference type="FunFam" id="3.10.100.10:FF:000118">
    <property type="entry name" value="C-type lectin domain family 4 member E"/>
    <property type="match status" value="1"/>
</dbReference>
<dbReference type="Gene3D" id="3.10.100.10">
    <property type="entry name" value="Mannose-Binding Protein A, subunit A"/>
    <property type="match status" value="1"/>
</dbReference>
<dbReference type="InterPro" id="IPR001304">
    <property type="entry name" value="C-type_lectin-like"/>
</dbReference>
<dbReference type="InterPro" id="IPR016186">
    <property type="entry name" value="C-type_lectin-like/link_sf"/>
</dbReference>
<dbReference type="InterPro" id="IPR050111">
    <property type="entry name" value="C-type_lectin/snaclec_domain"/>
</dbReference>
<dbReference type="InterPro" id="IPR018378">
    <property type="entry name" value="C-type_lectin_CS"/>
</dbReference>
<dbReference type="InterPro" id="IPR033989">
    <property type="entry name" value="CD209-like_CTLD"/>
</dbReference>
<dbReference type="InterPro" id="IPR016187">
    <property type="entry name" value="CTDL_fold"/>
</dbReference>
<dbReference type="PANTHER" id="PTHR22803">
    <property type="entry name" value="MANNOSE, PHOSPHOLIPASE, LECTIN RECEPTOR RELATED"/>
    <property type="match status" value="1"/>
</dbReference>
<dbReference type="Pfam" id="PF00059">
    <property type="entry name" value="Lectin_C"/>
    <property type="match status" value="1"/>
</dbReference>
<dbReference type="SMART" id="SM00034">
    <property type="entry name" value="CLECT"/>
    <property type="match status" value="1"/>
</dbReference>
<dbReference type="SUPFAM" id="SSF56436">
    <property type="entry name" value="C-type lectin-like"/>
    <property type="match status" value="1"/>
</dbReference>
<dbReference type="PROSITE" id="PS00615">
    <property type="entry name" value="C_TYPE_LECTIN_1"/>
    <property type="match status" value="1"/>
</dbReference>
<dbReference type="PROSITE" id="PS50041">
    <property type="entry name" value="C_TYPE_LECTIN_2"/>
    <property type="match status" value="1"/>
</dbReference>
<organism>
    <name type="scientific">Mus musculus</name>
    <name type="common">Mouse</name>
    <dbReference type="NCBI Taxonomy" id="10090"/>
    <lineage>
        <taxon>Eukaryota</taxon>
        <taxon>Metazoa</taxon>
        <taxon>Chordata</taxon>
        <taxon>Craniata</taxon>
        <taxon>Vertebrata</taxon>
        <taxon>Euteleostomi</taxon>
        <taxon>Mammalia</taxon>
        <taxon>Eutheria</taxon>
        <taxon>Euarchontoglires</taxon>
        <taxon>Glires</taxon>
        <taxon>Rodentia</taxon>
        <taxon>Myomorpha</taxon>
        <taxon>Muroidea</taxon>
        <taxon>Muridae</taxon>
        <taxon>Murinae</taxon>
        <taxon>Mus</taxon>
        <taxon>Mus</taxon>
    </lineage>
</organism>
<reference key="1">
    <citation type="journal article" date="1999" name="J. Immunol.">
        <title>A novel LPS-inducible C-type lectin is a transcriptional target of NF-IL6 in macrophages.</title>
        <authorList>
            <person name="Matsumoto M."/>
            <person name="Shimada T."/>
            <person name="Kaisho T."/>
            <person name="Sanjo H."/>
            <person name="Tanaka T."/>
            <person name="Copeland N.G."/>
            <person name="Gilbert D.J."/>
            <person name="Jenkins N.A."/>
            <person name="Akira S."/>
        </authorList>
    </citation>
    <scope>NUCLEOTIDE SEQUENCE [MRNA]</scope>
    <scope>FUNCTION</scope>
    <scope>SUBCELLULAR LOCATION</scope>
    <scope>TISSUE SPECIFICITY</scope>
    <scope>INDUCTION</scope>
</reference>
<reference key="2">
    <citation type="journal article" date="2004" name="Genome Res.">
        <title>The status, quality, and expansion of the NIH full-length cDNA project: the Mammalian Gene Collection (MGC).</title>
        <authorList>
            <consortium name="The MGC Project Team"/>
        </authorList>
    </citation>
    <scope>NUCLEOTIDE SEQUENCE [LARGE SCALE MRNA]</scope>
    <source>
        <strain>FVB/N</strain>
        <tissue>Mammary tumor</tissue>
    </source>
</reference>
<reference key="3">
    <citation type="journal article" date="2008" name="Glycobiology">
        <title>Human and mouse macrophage-inducible C-type lectin (Mincle) bind Candida albicans.</title>
        <authorList>
            <person name="Bugarcic A."/>
            <person name="Hitchens K."/>
            <person name="Beckhouse A.G."/>
            <person name="Wells C.A."/>
            <person name="Ashman R.B."/>
            <person name="Blanchard H."/>
        </authorList>
    </citation>
    <scope>FUNCTION AS RECEPTOR FOR CANDIDA ALBICANS</scope>
    <scope>SUBUNIT</scope>
</reference>
<reference key="4">
    <citation type="journal article" date="2008" name="J. Immunol.">
        <title>The macrophage-inducible C-type lectin, mincle, is an essential component of the innate immune response to Candida albicans.</title>
        <authorList>
            <person name="Wells C.A."/>
            <person name="Salvage-Jones J.A."/>
            <person name="Li X."/>
            <person name="Hitchens K."/>
            <person name="Butcher S."/>
            <person name="Murray R.Z."/>
            <person name="Beckhouse A.G."/>
            <person name="Lo Y.L."/>
            <person name="Manzanero S."/>
            <person name="Cobbold C."/>
            <person name="Schroder K."/>
            <person name="Ma B."/>
            <person name="Orr S."/>
            <person name="Stewart L."/>
            <person name="Lebus D."/>
            <person name="Sobieszczuk P."/>
            <person name="Hume D.A."/>
            <person name="Stow J."/>
            <person name="Blanchard H."/>
            <person name="Ashman R.B."/>
        </authorList>
    </citation>
    <scope>FUNCTION</scope>
    <scope>SUBCELLULAR LOCATION</scope>
    <scope>INDUCTION</scope>
    <scope>DISRUPTION PHENOTYPE</scope>
</reference>
<reference key="5">
    <citation type="journal article" date="2008" name="Nat. Immunol.">
        <title>Mincle is an ITAM-coupled activating receptor that senses damaged cells.</title>
        <authorList>
            <person name="Yamasaki S."/>
            <person name="Ishikawa E."/>
            <person name="Sakuma M."/>
            <person name="Hara H."/>
            <person name="Ogata K."/>
            <person name="Saito T."/>
        </authorList>
    </citation>
    <scope>INTERACTION WITH FCER1G</scope>
    <scope>INTERACTION WITH SAP130</scope>
    <scope>MUTAGENESIS OF ARG-42</scope>
    <scope>FUNCTION</scope>
</reference>
<reference key="6">
    <citation type="journal article" date="2009" name="J. Exp. Med.">
        <title>Direct recognition of the mycobacterial glycolipid, trehalose dimycolate, by C-type lectin Mincle.</title>
        <authorList>
            <person name="Ishikawa E."/>
            <person name="Ishikawa T."/>
            <person name="Morita Y.S."/>
            <person name="Toyonaga K."/>
            <person name="Yamada H."/>
            <person name="Takeuchi O."/>
            <person name="Kinoshita T."/>
            <person name="Akira S."/>
            <person name="Yoshikai Y."/>
            <person name="Yamasaki S."/>
        </authorList>
    </citation>
    <scope>FUNCTION</scope>
</reference>
<reference key="7">
    <citation type="journal article" date="2009" name="Proc. Natl. Acad. Sci. U.S.A.">
        <title>C-type lectin Mincle is an activating receptor for pathogenic fungus, Malassezia.</title>
        <authorList>
            <person name="Yamasaki S."/>
            <person name="Matsumoto M."/>
            <person name="Takeuchi O."/>
            <person name="Matsuzawa T."/>
            <person name="Ishikawa E."/>
            <person name="Sakuma M."/>
            <person name="Tateno H."/>
            <person name="Uno J."/>
            <person name="Hirabayashi J."/>
            <person name="Mikami Y."/>
            <person name="Takeda K."/>
            <person name="Akira S."/>
            <person name="Saito T."/>
        </authorList>
    </citation>
    <scope>DISRUPTION PHENOTYPE</scope>
    <scope>MUTAGENESIS OF GLU-169 AND ASN-171</scope>
    <scope>FUNCTION AS A RECEPTOR FOR MALASSEZIA</scope>
</reference>
<reference key="8">
    <citation type="journal article" date="2013" name="Immunity">
        <title>C-type lectin MCL is an FcRgamma-coupled receptor that mediates the adjuvanticity of mycobacterial cord factor.</title>
        <authorList>
            <person name="Miyake Y."/>
            <person name="Toyonaga K."/>
            <person name="Mori D."/>
            <person name="Kakuta S."/>
            <person name="Hoshino Y."/>
            <person name="Oyamada A."/>
            <person name="Yamada H."/>
            <person name="Ono K."/>
            <person name="Suyama M."/>
            <person name="Iwakura Y."/>
            <person name="Yoshikai Y."/>
            <person name="Yamasaki S."/>
        </authorList>
    </citation>
    <scope>FUNCTION</scope>
    <scope>TISSUE SPECIFICITY</scope>
    <scope>SUBUNIT</scope>
    <scope>IDENTIFICATION IN COMPLEX WITH FCER1G</scope>
    <scope>DISRUPTION PHENOTYPE</scope>
    <scope>INDUCTION BY TREHALOSE 6,6'-DIMYCOLATE</scope>
    <scope>SUBCELLULAR LOCATION</scope>
</reference>
<feature type="chain" id="PRO_0000046620" description="C-type lectin domain family 4 member E">
    <location>
        <begin position="1"/>
        <end position="214"/>
    </location>
</feature>
<feature type="topological domain" description="Cytoplasmic" evidence="3">
    <location>
        <begin position="1"/>
        <end position="22"/>
    </location>
</feature>
<feature type="transmembrane region" description="Helical; Signal-anchor for type II membrane protein" evidence="3">
    <location>
        <begin position="23"/>
        <end position="45"/>
    </location>
</feature>
<feature type="topological domain" description="Extracellular" evidence="3">
    <location>
        <begin position="46"/>
        <end position="214"/>
    </location>
</feature>
<feature type="domain" description="C-type lectin" evidence="4">
    <location>
        <begin position="87"/>
        <end position="206"/>
    </location>
</feature>
<feature type="short sequence motif" description="Confers specificity for glucose/mannose-type carbohydrates" evidence="2">
    <location>
        <begin position="169"/>
        <end position="171"/>
    </location>
</feature>
<feature type="binding site" evidence="2">
    <location>
        <position position="117"/>
    </location>
    <ligand>
        <name>Ca(2+)</name>
        <dbReference type="ChEBI" id="CHEBI:29108"/>
        <label>1</label>
    </ligand>
</feature>
<feature type="binding site" evidence="2">
    <location>
        <position position="123"/>
    </location>
    <ligand>
        <name>Ca(2+)</name>
        <dbReference type="ChEBI" id="CHEBI:29108"/>
        <label>1</label>
    </ligand>
</feature>
<feature type="binding site" evidence="2">
    <location>
        <position position="169"/>
    </location>
    <ligand>
        <name>Ca(2+)</name>
        <dbReference type="ChEBI" id="CHEBI:29108"/>
        <label>2</label>
    </ligand>
</feature>
<feature type="binding site" evidence="2">
    <location>
        <position position="171"/>
    </location>
    <ligand>
        <name>Ca(2+)</name>
        <dbReference type="ChEBI" id="CHEBI:29108"/>
        <label>2</label>
    </ligand>
</feature>
<feature type="binding site" evidence="2">
    <location>
        <position position="193"/>
    </location>
    <ligand>
        <name>Ca(2+)</name>
        <dbReference type="ChEBI" id="CHEBI:29108"/>
        <label>2</label>
    </ligand>
</feature>
<feature type="binding site" evidence="2">
    <location>
        <position position="194"/>
    </location>
    <ligand>
        <name>Ca(2+)</name>
        <dbReference type="ChEBI" id="CHEBI:29108"/>
        <label>2</label>
    </ligand>
</feature>
<feature type="binding site" evidence="2">
    <location>
        <position position="206"/>
    </location>
    <ligand>
        <name>Ca(2+)</name>
        <dbReference type="ChEBI" id="CHEBI:29108"/>
        <label>1</label>
    </ligand>
</feature>
<feature type="glycosylation site" description="N-linked (GlcNAc...) asparagine" evidence="3">
    <location>
        <position position="107"/>
    </location>
</feature>
<feature type="disulfide bond" evidence="4">
    <location>
        <begin position="80"/>
        <end position="91"/>
    </location>
</feature>
<feature type="disulfide bond" evidence="4">
    <location>
        <begin position="108"/>
        <end position="205"/>
    </location>
</feature>
<feature type="disulfide bond" evidence="4">
    <location>
        <begin position="179"/>
        <end position="197"/>
    </location>
</feature>
<feature type="mutagenesis site" description="Abolishes the association with FCER1G." evidence="8">
    <original>R</original>
    <variation>I</variation>
    <location>
        <position position="42"/>
    </location>
</feature>
<feature type="mutagenesis site" description="Abrogates Malassezia recognition; when associated with D-171." evidence="9">
    <original>E</original>
    <variation>Q</variation>
    <location>
        <position position="169"/>
    </location>
</feature>
<feature type="mutagenesis site" description="Abrogates Malassezia recognition; when associated with Q-169." evidence="9">
    <original>N</original>
    <variation>D</variation>
    <location>
        <position position="171"/>
    </location>
</feature>
<name>CLC4E_MOUSE</name>
<gene>
    <name evidence="16" type="primary">Clec4e</name>
    <name type="synonym">Clecsf9</name>
    <name evidence="12 13" type="synonym">Mincle</name>
</gene>
<proteinExistence type="evidence at protein level"/>
<comment type="function">
    <text evidence="6 7 8 9 10 11">Calcium-dependent lectin that acts as a pattern recognition receptor (PRR) of the innate immune system: recognizes damage-associated molecular patterns (DAMPs) of abnormal self and pathogen-associated molecular patterns (PAMPs) of bacteria and fungi (PubMed:18490740, PubMed:18509109, PubMed:18776906, PubMed:19171887, PubMed:20008526, PubMed:23602766). The PAMPs notably include mycobacterial trehalose 6,6'-dimycolate (TDM), a cell wall glycolipid with potent adjuvant immunomodulatory functions (PubMed:20008526, PubMed:23602766). Interacts with signaling adapter Fc receptor gamma chain/FCER1G to form a functional complex in myeloid cells (PubMed:18776906, PubMed:23602766). Binding of mycobacterial trehalose 6,6'-dimycolate (TDM) to this receptor complex leads to phosphorylation of the immunoreceptor tyrosine-based activation motif (ITAM) of FCER1G, triggering activation of SYK, CARD9 and NF-kappa-B, consequently driving maturation of antigen-presenting cells and shaping antigen-specific priming of T-cells toward effector T-helper 1 (Th1) and T-helper 17 (Th17) cell subtypes (PubMed:23602766). Also recognizes alpha-mannose residues on pathogenic fungi of the genus Malassezia and mediates macrophage activation (PubMed:19171887). Through recognition of DAMPs released upon nonhomeostatic cell death, enables immune sensing of damaged self and promotes inflammatory cell infiltration into the damaged tissue (PubMed:18776906).</text>
</comment>
<comment type="subunit">
    <text evidence="1 7 11">Monomer and homodimer (PubMed:18509109). Interacts with signaling adapter Fc receptor gamma chain/FCER1G to form a functional complex; the interaction is direct (PubMed:23602766). Alternatively, acts as a bridge for interaction between CLEC4D and FCER1G. A heterodimer of CLEC4E and CLEC4D associates with FCER1G to form a functional complex (By similarity). Interacts with SAP130 nuclear protein that is released from necrotic cells; the interaction is direct (PubMed:23602766).</text>
</comment>
<comment type="subcellular location">
    <subcellularLocation>
        <location evidence="6 14 15">Cell membrane</location>
        <topology evidence="14">Single-pass type II membrane protein</topology>
    </subcellularLocation>
    <subcellularLocation>
        <location evidence="6">Cell projection</location>
        <location evidence="6">Phagocytic cup</location>
    </subcellularLocation>
</comment>
<comment type="tissue specificity">
    <text evidence="5 11">Highly expressed in macrophages in response to stimulation with bacterial glycolipids and pro-inflammatory cytokines (PubMed:10528209). Expressed in dendritic cells (at protein level) in response to stimulation with mycobacterial trehalose 6,6'-dimycolate (TDM) (PubMed:23602766).</text>
</comment>
<comment type="induction">
    <text evidence="5 6 8 11">Expression is induced upon exposure to bacterial glycolipids including lipopolysaccharide (LPS) and mycobacterial trehalose 6,6'-dimycolate (TDM) and several pro-inflammatory cytokines, including IFNG and TNF (PubMed:10528209, PubMed:23602766). Rapidly induced in thymus in response to whole-body irradiation and excessive cell death (PubMed:18776906). Induced in macrophages in response to C.albicans infection (PubMed:18490740).</text>
</comment>
<comment type="disruption phenotype">
    <text evidence="6 9 11">Knockout mice are born at the expected Mendelian rate (PubMed:19171887, PubMed:23602766). When compared to wild-type littermates, deficient mice show resistance to lethal systemic inflammation caused by exposure to mycobacterial cord factor/trehalose 6,6'-dimycolate (TDM) (PubMed:23602766). Mice are also susceptibility to systemic candidiasis (PubMed:18490740).</text>
</comment>
<comment type="online information" name="Functional Glycomics Gateway - Glycan Binding">
    <link uri="http://www.functionalglycomics.org/glycomics/GBPServlet?&amp;operationType=view&amp;cbpId=cbp_mou_Ctlect_167"/>
    <text>Mincle</text>
</comment>
<evidence type="ECO:0000250" key="1">
    <source>
        <dbReference type="UniProtKB" id="Q67EQ1"/>
    </source>
</evidence>
<evidence type="ECO:0000250" key="2">
    <source>
        <dbReference type="UniProtKB" id="Q9ULY5"/>
    </source>
</evidence>
<evidence type="ECO:0000255" key="3"/>
<evidence type="ECO:0000255" key="4">
    <source>
        <dbReference type="PROSITE-ProRule" id="PRU00040"/>
    </source>
</evidence>
<evidence type="ECO:0000269" key="5">
    <source>
    </source>
</evidence>
<evidence type="ECO:0000269" key="6">
    <source>
    </source>
</evidence>
<evidence type="ECO:0000269" key="7">
    <source>
    </source>
</evidence>
<evidence type="ECO:0000269" key="8">
    <source>
    </source>
</evidence>
<evidence type="ECO:0000269" key="9">
    <source>
    </source>
</evidence>
<evidence type="ECO:0000269" key="10">
    <source>
    </source>
</evidence>
<evidence type="ECO:0000269" key="11">
    <source>
    </source>
</evidence>
<evidence type="ECO:0000303" key="12">
    <source>
    </source>
</evidence>
<evidence type="ECO:0000303" key="13">
    <source>
    </source>
</evidence>
<evidence type="ECO:0000305" key="14">
    <source>
    </source>
</evidence>
<evidence type="ECO:0000305" key="15">
    <source>
    </source>
</evidence>
<evidence type="ECO:0000312" key="16">
    <source>
        <dbReference type="MGI" id="MGI:1861232"/>
    </source>
</evidence>
<sequence>MNSTKSPASHHTERGCFKNSQVLSWTIAGASILFLSGCFITRCVVTYRSSQISGQNLQPHRNIKELSCYSEASGSVKNCCPLNWKHYQSSCYFFSTTTLTWSSSLKNCSDMGAHLVVIDTQEEQEFLFRTKPKRKEFYIGLTDQVVEGQWQWVDDTPFTESLSFWDAGEPNNIVLVEDCATIRDSSNSRKNWNDIPCFYSMPWICEMPEISPLD</sequence>